<evidence type="ECO:0000255" key="1">
    <source>
        <dbReference type="HAMAP-Rule" id="MF_01844"/>
    </source>
</evidence>
<protein>
    <recommendedName>
        <fullName evidence="1">Na(+)/H(+) antiporter NhaA 1</fullName>
    </recommendedName>
    <alternativeName>
        <fullName evidence="1">Sodium/proton antiporter NhaA 1</fullName>
    </alternativeName>
</protein>
<feature type="chain" id="PRO_0000334291" description="Na(+)/H(+) antiporter NhaA 1">
    <location>
        <begin position="1"/>
        <end position="381"/>
    </location>
</feature>
<feature type="transmembrane region" description="Helical" evidence="1">
    <location>
        <begin position="18"/>
        <end position="38"/>
    </location>
</feature>
<feature type="transmembrane region" description="Helical" evidence="1">
    <location>
        <begin position="53"/>
        <end position="73"/>
    </location>
</feature>
<feature type="transmembrane region" description="Helical" evidence="1">
    <location>
        <begin position="89"/>
        <end position="109"/>
    </location>
</feature>
<feature type="transmembrane region" description="Helical" evidence="1">
    <location>
        <begin position="118"/>
        <end position="138"/>
    </location>
</feature>
<feature type="transmembrane region" description="Helical" evidence="1">
    <location>
        <begin position="147"/>
        <end position="167"/>
    </location>
</feature>
<feature type="transmembrane region" description="Helical" evidence="1">
    <location>
        <begin position="170"/>
        <end position="190"/>
    </location>
</feature>
<feature type="transmembrane region" description="Helical" evidence="1">
    <location>
        <begin position="210"/>
        <end position="230"/>
    </location>
</feature>
<feature type="transmembrane region" description="Helical" evidence="1">
    <location>
        <begin position="251"/>
        <end position="271"/>
    </location>
</feature>
<feature type="transmembrane region" description="Helical" evidence="1">
    <location>
        <begin position="283"/>
        <end position="303"/>
    </location>
</feature>
<feature type="transmembrane region" description="Helical" evidence="1">
    <location>
        <begin position="321"/>
        <end position="341"/>
    </location>
</feature>
<feature type="transmembrane region" description="Helical" evidence="1">
    <location>
        <begin position="348"/>
        <end position="368"/>
    </location>
</feature>
<reference key="1">
    <citation type="journal article" date="2009" name="Appl. Environ. Microbiol.">
        <title>Novel features of the polysaccharide-digesting gliding bacterium Flavobacterium johnsoniae as revealed by genome sequence analysis.</title>
        <authorList>
            <person name="McBride M.J."/>
            <person name="Xie G."/>
            <person name="Martens E.C."/>
            <person name="Lapidus A."/>
            <person name="Henrissat B."/>
            <person name="Rhodes R.G."/>
            <person name="Goltsman E."/>
            <person name="Wang W."/>
            <person name="Xu J."/>
            <person name="Hunnicutt D.W."/>
            <person name="Staroscik A.M."/>
            <person name="Hoover T.R."/>
            <person name="Cheng Y.Q."/>
            <person name="Stein J.L."/>
        </authorList>
    </citation>
    <scope>NUCLEOTIDE SEQUENCE [LARGE SCALE GENOMIC DNA]</scope>
    <source>
        <strain>ATCC 17061 / DSM 2064 / JCM 8514 / BCRC 14874 / CCUG 350202 / NBRC 14942 / NCIMB 11054 / UW101</strain>
    </source>
</reference>
<organism>
    <name type="scientific">Flavobacterium johnsoniae (strain ATCC 17061 / DSM 2064 / JCM 8514 / BCRC 14874 / CCUG 350202 / NBRC 14942 / NCIMB 11054 / UW101)</name>
    <name type="common">Cytophaga johnsonae</name>
    <dbReference type="NCBI Taxonomy" id="376686"/>
    <lineage>
        <taxon>Bacteria</taxon>
        <taxon>Pseudomonadati</taxon>
        <taxon>Bacteroidota</taxon>
        <taxon>Flavobacteriia</taxon>
        <taxon>Flavobacteriales</taxon>
        <taxon>Flavobacteriaceae</taxon>
        <taxon>Flavobacterium</taxon>
    </lineage>
</organism>
<name>NHAA1_FLAJ1</name>
<gene>
    <name evidence="1" type="primary">nhaA1</name>
    <name type="ordered locus">Fjoh_0840</name>
</gene>
<sequence>MKLTKTFKAFFENEKSGGLLLLFVTVISLWAANSSYSAGYIAFWEKDLAGHSITHWINDGLMTIFFLLIGLELEREIYHGELSNIKNASLPIMAAFGGMLIPAATFLALNFGTSTQNGAGIPMATDIAFAIGILSLLGDKVPASLKVFLTALAVIDDLGAIIVIAVFYTTSIGFVNLAIALGIWVFLFVLNRMKVYNLIPYLIGGVIMWYFMLNSGIHATITGVILAFVIPFGDGGEKSTSYKLQHFLHQPVAFFILPLFAIANTCIAIESNWHIGLNHPNAFGIILGLVIGKPLGILLFSSIGVSAGLCALPKNLKWAHILGAGMLGGIGFTMSIFITLLAFKDPEIIVFSKIAIIIASIISGITGFVYLRYILTTNKNT</sequence>
<keyword id="KW-0050">Antiport</keyword>
<keyword id="KW-0997">Cell inner membrane</keyword>
<keyword id="KW-1003">Cell membrane</keyword>
<keyword id="KW-0406">Ion transport</keyword>
<keyword id="KW-0472">Membrane</keyword>
<keyword id="KW-0915">Sodium</keyword>
<keyword id="KW-0739">Sodium transport</keyword>
<keyword id="KW-0812">Transmembrane</keyword>
<keyword id="KW-1133">Transmembrane helix</keyword>
<keyword id="KW-0813">Transport</keyword>
<dbReference type="EMBL" id="CP000685">
    <property type="protein sequence ID" value="ABQ03874.1"/>
    <property type="molecule type" value="Genomic_DNA"/>
</dbReference>
<dbReference type="RefSeq" id="WP_012022927.1">
    <property type="nucleotide sequence ID" value="NC_009441.1"/>
</dbReference>
<dbReference type="SMR" id="A5FLP0"/>
<dbReference type="STRING" id="376686.Fjoh_0840"/>
<dbReference type="KEGG" id="fjo:Fjoh_0840"/>
<dbReference type="eggNOG" id="COG3004">
    <property type="taxonomic scope" value="Bacteria"/>
</dbReference>
<dbReference type="HOGENOM" id="CLU_015803_1_0_10"/>
<dbReference type="OrthoDB" id="9808135at2"/>
<dbReference type="Proteomes" id="UP000006694">
    <property type="component" value="Chromosome"/>
</dbReference>
<dbReference type="GO" id="GO:0005886">
    <property type="term" value="C:plasma membrane"/>
    <property type="evidence" value="ECO:0007669"/>
    <property type="project" value="UniProtKB-SubCell"/>
</dbReference>
<dbReference type="GO" id="GO:0015385">
    <property type="term" value="F:sodium:proton antiporter activity"/>
    <property type="evidence" value="ECO:0007669"/>
    <property type="project" value="TreeGrafter"/>
</dbReference>
<dbReference type="GO" id="GO:0006885">
    <property type="term" value="P:regulation of pH"/>
    <property type="evidence" value="ECO:0007669"/>
    <property type="project" value="InterPro"/>
</dbReference>
<dbReference type="Gene3D" id="1.20.1530.10">
    <property type="entry name" value="Na+/H+ antiporter like domain"/>
    <property type="match status" value="1"/>
</dbReference>
<dbReference type="HAMAP" id="MF_01844">
    <property type="entry name" value="NhaA"/>
    <property type="match status" value="1"/>
</dbReference>
<dbReference type="InterPro" id="IPR023171">
    <property type="entry name" value="Na/H_antiporter_dom_sf"/>
</dbReference>
<dbReference type="InterPro" id="IPR004670">
    <property type="entry name" value="NhaA"/>
</dbReference>
<dbReference type="NCBIfam" id="TIGR00773">
    <property type="entry name" value="NhaA"/>
    <property type="match status" value="1"/>
</dbReference>
<dbReference type="NCBIfam" id="NF007111">
    <property type="entry name" value="PRK09560.1"/>
    <property type="match status" value="1"/>
</dbReference>
<dbReference type="PANTHER" id="PTHR30341:SF0">
    <property type="entry name" value="NA(+)_H(+) ANTIPORTER NHAA"/>
    <property type="match status" value="1"/>
</dbReference>
<dbReference type="PANTHER" id="PTHR30341">
    <property type="entry name" value="SODIUM ION/PROTON ANTIPORTER NHAA-RELATED"/>
    <property type="match status" value="1"/>
</dbReference>
<dbReference type="Pfam" id="PF06965">
    <property type="entry name" value="Na_H_antiport_1"/>
    <property type="match status" value="1"/>
</dbReference>
<accession>A5FLP0</accession>
<proteinExistence type="inferred from homology"/>
<comment type="function">
    <text evidence="1">Na(+)/H(+) antiporter that extrudes sodium in exchange for external protons.</text>
</comment>
<comment type="catalytic activity">
    <reaction evidence="1">
        <text>Na(+)(in) + 2 H(+)(out) = Na(+)(out) + 2 H(+)(in)</text>
        <dbReference type="Rhea" id="RHEA:29251"/>
        <dbReference type="ChEBI" id="CHEBI:15378"/>
        <dbReference type="ChEBI" id="CHEBI:29101"/>
    </reaction>
    <physiologicalReaction direction="left-to-right" evidence="1">
        <dbReference type="Rhea" id="RHEA:29252"/>
    </physiologicalReaction>
</comment>
<comment type="subcellular location">
    <subcellularLocation>
        <location evidence="1">Cell inner membrane</location>
        <topology evidence="1">Multi-pass membrane protein</topology>
    </subcellularLocation>
</comment>
<comment type="similarity">
    <text evidence="1">Belongs to the NhaA Na(+)/H(+) (TC 2.A.33) antiporter family.</text>
</comment>